<dbReference type="EC" id="3.1.1.31" evidence="1"/>
<dbReference type="EMBL" id="CP001113">
    <property type="protein sequence ID" value="ACF64970.1"/>
    <property type="molecule type" value="Genomic_DNA"/>
</dbReference>
<dbReference type="RefSeq" id="WP_000815468.1">
    <property type="nucleotide sequence ID" value="NZ_CCMR01000003.1"/>
</dbReference>
<dbReference type="SMR" id="B4SZI8"/>
<dbReference type="KEGG" id="see:SNSL254_A0849"/>
<dbReference type="HOGENOM" id="CLU_038716_2_0_6"/>
<dbReference type="UniPathway" id="UPA00115">
    <property type="reaction ID" value="UER00409"/>
</dbReference>
<dbReference type="Proteomes" id="UP000008824">
    <property type="component" value="Chromosome"/>
</dbReference>
<dbReference type="GO" id="GO:0005829">
    <property type="term" value="C:cytosol"/>
    <property type="evidence" value="ECO:0007669"/>
    <property type="project" value="TreeGrafter"/>
</dbReference>
<dbReference type="GO" id="GO:0017057">
    <property type="term" value="F:6-phosphogluconolactonase activity"/>
    <property type="evidence" value="ECO:0007669"/>
    <property type="project" value="UniProtKB-UniRule"/>
</dbReference>
<dbReference type="GO" id="GO:0006006">
    <property type="term" value="P:glucose metabolic process"/>
    <property type="evidence" value="ECO:0007669"/>
    <property type="project" value="UniProtKB-KW"/>
</dbReference>
<dbReference type="GO" id="GO:0009051">
    <property type="term" value="P:pentose-phosphate shunt, oxidative branch"/>
    <property type="evidence" value="ECO:0007669"/>
    <property type="project" value="UniProtKB-UniRule"/>
</dbReference>
<dbReference type="FunFam" id="2.130.10.10:FF:000051">
    <property type="entry name" value="6-phosphogluconolactonase"/>
    <property type="match status" value="1"/>
</dbReference>
<dbReference type="Gene3D" id="2.130.10.10">
    <property type="entry name" value="YVTN repeat-like/Quinoprotein amine dehydrogenase"/>
    <property type="match status" value="1"/>
</dbReference>
<dbReference type="HAMAP" id="MF_01605">
    <property type="entry name" value="6P_gluconolactonase"/>
    <property type="match status" value="1"/>
</dbReference>
<dbReference type="InterPro" id="IPR022528">
    <property type="entry name" value="6-phosphogluconolactonase_YbhE"/>
</dbReference>
<dbReference type="InterPro" id="IPR050282">
    <property type="entry name" value="Cycloisomerase_2"/>
</dbReference>
<dbReference type="InterPro" id="IPR019405">
    <property type="entry name" value="Lactonase_7-beta_prop"/>
</dbReference>
<dbReference type="InterPro" id="IPR011045">
    <property type="entry name" value="N2O_reductase_N"/>
</dbReference>
<dbReference type="InterPro" id="IPR015943">
    <property type="entry name" value="WD40/YVTN_repeat-like_dom_sf"/>
</dbReference>
<dbReference type="NCBIfam" id="NF008258">
    <property type="entry name" value="PRK11028.1"/>
    <property type="match status" value="1"/>
</dbReference>
<dbReference type="PANTHER" id="PTHR30344:SF1">
    <property type="entry name" value="6-PHOSPHOGLUCONOLACTONASE"/>
    <property type="match status" value="1"/>
</dbReference>
<dbReference type="PANTHER" id="PTHR30344">
    <property type="entry name" value="6-PHOSPHOGLUCONOLACTONASE-RELATED"/>
    <property type="match status" value="1"/>
</dbReference>
<dbReference type="Pfam" id="PF10282">
    <property type="entry name" value="Lactonase"/>
    <property type="match status" value="1"/>
</dbReference>
<dbReference type="SUPFAM" id="SSF50974">
    <property type="entry name" value="Nitrous oxide reductase, N-terminal domain"/>
    <property type="match status" value="2"/>
</dbReference>
<keyword id="KW-0119">Carbohydrate metabolism</keyword>
<keyword id="KW-0313">Glucose metabolism</keyword>
<keyword id="KW-0378">Hydrolase</keyword>
<accession>B4SZI8</accession>
<protein>
    <recommendedName>
        <fullName evidence="1">6-phosphogluconolactonase</fullName>
        <shortName evidence="1">6-P-gluconolactonase</shortName>
        <ecNumber evidence="1">3.1.1.31</ecNumber>
    </recommendedName>
</protein>
<proteinExistence type="inferred from homology"/>
<evidence type="ECO:0000255" key="1">
    <source>
        <dbReference type="HAMAP-Rule" id="MF_01605"/>
    </source>
</evidence>
<sequence>MKQTVYTASPESQQIHVWSLNHEGTLTLVQVVDVPGQVQPMVVSPDKRYLYVGVRPEFRVLAYRIAPDDGALTFAAESALPGSPTHISTDHHGRFVFVGSYNAGNVSVTRLQDGLPVELVDVVEGLDGCHSANITPDNRTLWVPALKQDRICLFTLSDDGHLVAQEPAEVNTVEGAGPRHMVFHPNRQYAYCVNELNSSVDVWQLKNPHGEIECVQTLDMMPADFSDTRWAADIHITPDGRHLYACDRTASLITVFSVSEDGSVLSVEGFQPTEAQPRGFNIDNSGKYLIAAGQKSHHIAVYEITGTQGLLTEKGRYAVGQGPMWVVVNAY</sequence>
<comment type="function">
    <text evidence="1">Catalyzes the hydrolysis of 6-phosphogluconolactone to 6-phosphogluconate.</text>
</comment>
<comment type="catalytic activity">
    <reaction evidence="1">
        <text>6-phospho-D-glucono-1,5-lactone + H2O = 6-phospho-D-gluconate + H(+)</text>
        <dbReference type="Rhea" id="RHEA:12556"/>
        <dbReference type="ChEBI" id="CHEBI:15377"/>
        <dbReference type="ChEBI" id="CHEBI:15378"/>
        <dbReference type="ChEBI" id="CHEBI:57955"/>
        <dbReference type="ChEBI" id="CHEBI:58759"/>
        <dbReference type="EC" id="3.1.1.31"/>
    </reaction>
</comment>
<comment type="pathway">
    <text evidence="1">Carbohydrate degradation; pentose phosphate pathway; D-ribulose 5-phosphate from D-glucose 6-phosphate (oxidative stage): step 2/3.</text>
</comment>
<comment type="similarity">
    <text evidence="1">Belongs to the cycloisomerase 2 family.</text>
</comment>
<feature type="chain" id="PRO_1000148166" description="6-phosphogluconolactonase">
    <location>
        <begin position="1"/>
        <end position="331"/>
    </location>
</feature>
<gene>
    <name evidence="1" type="primary">pgl</name>
    <name type="ordered locus">SNSL254_A0849</name>
</gene>
<organism>
    <name type="scientific">Salmonella newport (strain SL254)</name>
    <dbReference type="NCBI Taxonomy" id="423368"/>
    <lineage>
        <taxon>Bacteria</taxon>
        <taxon>Pseudomonadati</taxon>
        <taxon>Pseudomonadota</taxon>
        <taxon>Gammaproteobacteria</taxon>
        <taxon>Enterobacterales</taxon>
        <taxon>Enterobacteriaceae</taxon>
        <taxon>Salmonella</taxon>
    </lineage>
</organism>
<name>6PGL_SALNS</name>
<reference key="1">
    <citation type="journal article" date="2011" name="J. Bacteriol.">
        <title>Comparative genomics of 28 Salmonella enterica isolates: evidence for CRISPR-mediated adaptive sublineage evolution.</title>
        <authorList>
            <person name="Fricke W.F."/>
            <person name="Mammel M.K."/>
            <person name="McDermott P.F."/>
            <person name="Tartera C."/>
            <person name="White D.G."/>
            <person name="Leclerc J.E."/>
            <person name="Ravel J."/>
            <person name="Cebula T.A."/>
        </authorList>
    </citation>
    <scope>NUCLEOTIDE SEQUENCE [LARGE SCALE GENOMIC DNA]</scope>
    <source>
        <strain>SL254</strain>
    </source>
</reference>